<reference key="1">
    <citation type="journal article" date="2005" name="Science">
        <title>The transcriptional landscape of the mammalian genome.</title>
        <authorList>
            <person name="Carninci P."/>
            <person name="Kasukawa T."/>
            <person name="Katayama S."/>
            <person name="Gough J."/>
            <person name="Frith M.C."/>
            <person name="Maeda N."/>
            <person name="Oyama R."/>
            <person name="Ravasi T."/>
            <person name="Lenhard B."/>
            <person name="Wells C."/>
            <person name="Kodzius R."/>
            <person name="Shimokawa K."/>
            <person name="Bajic V.B."/>
            <person name="Brenner S.E."/>
            <person name="Batalov S."/>
            <person name="Forrest A.R."/>
            <person name="Zavolan M."/>
            <person name="Davis M.J."/>
            <person name="Wilming L.G."/>
            <person name="Aidinis V."/>
            <person name="Allen J.E."/>
            <person name="Ambesi-Impiombato A."/>
            <person name="Apweiler R."/>
            <person name="Aturaliya R.N."/>
            <person name="Bailey T.L."/>
            <person name="Bansal M."/>
            <person name="Baxter L."/>
            <person name="Beisel K.W."/>
            <person name="Bersano T."/>
            <person name="Bono H."/>
            <person name="Chalk A.M."/>
            <person name="Chiu K.P."/>
            <person name="Choudhary V."/>
            <person name="Christoffels A."/>
            <person name="Clutterbuck D.R."/>
            <person name="Crowe M.L."/>
            <person name="Dalla E."/>
            <person name="Dalrymple B.P."/>
            <person name="de Bono B."/>
            <person name="Della Gatta G."/>
            <person name="di Bernardo D."/>
            <person name="Down T."/>
            <person name="Engstrom P."/>
            <person name="Fagiolini M."/>
            <person name="Faulkner G."/>
            <person name="Fletcher C.F."/>
            <person name="Fukushima T."/>
            <person name="Furuno M."/>
            <person name="Futaki S."/>
            <person name="Gariboldi M."/>
            <person name="Georgii-Hemming P."/>
            <person name="Gingeras T.R."/>
            <person name="Gojobori T."/>
            <person name="Green R.E."/>
            <person name="Gustincich S."/>
            <person name="Harbers M."/>
            <person name="Hayashi Y."/>
            <person name="Hensch T.K."/>
            <person name="Hirokawa N."/>
            <person name="Hill D."/>
            <person name="Huminiecki L."/>
            <person name="Iacono M."/>
            <person name="Ikeo K."/>
            <person name="Iwama A."/>
            <person name="Ishikawa T."/>
            <person name="Jakt M."/>
            <person name="Kanapin A."/>
            <person name="Katoh M."/>
            <person name="Kawasawa Y."/>
            <person name="Kelso J."/>
            <person name="Kitamura H."/>
            <person name="Kitano H."/>
            <person name="Kollias G."/>
            <person name="Krishnan S.P."/>
            <person name="Kruger A."/>
            <person name="Kummerfeld S.K."/>
            <person name="Kurochkin I.V."/>
            <person name="Lareau L.F."/>
            <person name="Lazarevic D."/>
            <person name="Lipovich L."/>
            <person name="Liu J."/>
            <person name="Liuni S."/>
            <person name="McWilliam S."/>
            <person name="Madan Babu M."/>
            <person name="Madera M."/>
            <person name="Marchionni L."/>
            <person name="Matsuda H."/>
            <person name="Matsuzawa S."/>
            <person name="Miki H."/>
            <person name="Mignone F."/>
            <person name="Miyake S."/>
            <person name="Morris K."/>
            <person name="Mottagui-Tabar S."/>
            <person name="Mulder N."/>
            <person name="Nakano N."/>
            <person name="Nakauchi H."/>
            <person name="Ng P."/>
            <person name="Nilsson R."/>
            <person name="Nishiguchi S."/>
            <person name="Nishikawa S."/>
            <person name="Nori F."/>
            <person name="Ohara O."/>
            <person name="Okazaki Y."/>
            <person name="Orlando V."/>
            <person name="Pang K.C."/>
            <person name="Pavan W.J."/>
            <person name="Pavesi G."/>
            <person name="Pesole G."/>
            <person name="Petrovsky N."/>
            <person name="Piazza S."/>
            <person name="Reed J."/>
            <person name="Reid J.F."/>
            <person name="Ring B.Z."/>
            <person name="Ringwald M."/>
            <person name="Rost B."/>
            <person name="Ruan Y."/>
            <person name="Salzberg S.L."/>
            <person name="Sandelin A."/>
            <person name="Schneider C."/>
            <person name="Schoenbach C."/>
            <person name="Sekiguchi K."/>
            <person name="Semple C.A."/>
            <person name="Seno S."/>
            <person name="Sessa L."/>
            <person name="Sheng Y."/>
            <person name="Shibata Y."/>
            <person name="Shimada H."/>
            <person name="Shimada K."/>
            <person name="Silva D."/>
            <person name="Sinclair B."/>
            <person name="Sperling S."/>
            <person name="Stupka E."/>
            <person name="Sugiura K."/>
            <person name="Sultana R."/>
            <person name="Takenaka Y."/>
            <person name="Taki K."/>
            <person name="Tammoja K."/>
            <person name="Tan S.L."/>
            <person name="Tang S."/>
            <person name="Taylor M.S."/>
            <person name="Tegner J."/>
            <person name="Teichmann S.A."/>
            <person name="Ueda H.R."/>
            <person name="van Nimwegen E."/>
            <person name="Verardo R."/>
            <person name="Wei C.L."/>
            <person name="Yagi K."/>
            <person name="Yamanishi H."/>
            <person name="Zabarovsky E."/>
            <person name="Zhu S."/>
            <person name="Zimmer A."/>
            <person name="Hide W."/>
            <person name="Bult C."/>
            <person name="Grimmond S.M."/>
            <person name="Teasdale R.D."/>
            <person name="Liu E.T."/>
            <person name="Brusic V."/>
            <person name="Quackenbush J."/>
            <person name="Wahlestedt C."/>
            <person name="Mattick J.S."/>
            <person name="Hume D.A."/>
            <person name="Kai C."/>
            <person name="Sasaki D."/>
            <person name="Tomaru Y."/>
            <person name="Fukuda S."/>
            <person name="Kanamori-Katayama M."/>
            <person name="Suzuki M."/>
            <person name="Aoki J."/>
            <person name="Arakawa T."/>
            <person name="Iida J."/>
            <person name="Imamura K."/>
            <person name="Itoh M."/>
            <person name="Kato T."/>
            <person name="Kawaji H."/>
            <person name="Kawagashira N."/>
            <person name="Kawashima T."/>
            <person name="Kojima M."/>
            <person name="Kondo S."/>
            <person name="Konno H."/>
            <person name="Nakano K."/>
            <person name="Ninomiya N."/>
            <person name="Nishio T."/>
            <person name="Okada M."/>
            <person name="Plessy C."/>
            <person name="Shibata K."/>
            <person name="Shiraki T."/>
            <person name="Suzuki S."/>
            <person name="Tagami M."/>
            <person name="Waki K."/>
            <person name="Watahiki A."/>
            <person name="Okamura-Oho Y."/>
            <person name="Suzuki H."/>
            <person name="Kawai J."/>
            <person name="Hayashizaki Y."/>
        </authorList>
    </citation>
    <scope>NUCLEOTIDE SEQUENCE [LARGE SCALE MRNA]</scope>
    <source>
        <strain>C57BL/6J</strain>
        <tissue>Cerebellum</tissue>
        <tissue>Corpora quadrigemina</tissue>
        <tissue>Skin</tissue>
    </source>
</reference>
<reference key="2">
    <citation type="journal article" date="2009" name="PLoS Biol.">
        <title>Lineage-specific biology revealed by a finished genome assembly of the mouse.</title>
        <authorList>
            <person name="Church D.M."/>
            <person name="Goodstadt L."/>
            <person name="Hillier L.W."/>
            <person name="Zody M.C."/>
            <person name="Goldstein S."/>
            <person name="She X."/>
            <person name="Bult C.J."/>
            <person name="Agarwala R."/>
            <person name="Cherry J.L."/>
            <person name="DiCuccio M."/>
            <person name="Hlavina W."/>
            <person name="Kapustin Y."/>
            <person name="Meric P."/>
            <person name="Maglott D."/>
            <person name="Birtle Z."/>
            <person name="Marques A.C."/>
            <person name="Graves T."/>
            <person name="Zhou S."/>
            <person name="Teague B."/>
            <person name="Potamousis K."/>
            <person name="Churas C."/>
            <person name="Place M."/>
            <person name="Herschleb J."/>
            <person name="Runnheim R."/>
            <person name="Forrest D."/>
            <person name="Amos-Landgraf J."/>
            <person name="Schwartz D.C."/>
            <person name="Cheng Z."/>
            <person name="Lindblad-Toh K."/>
            <person name="Eichler E.E."/>
            <person name="Ponting C.P."/>
        </authorList>
    </citation>
    <scope>NUCLEOTIDE SEQUENCE [LARGE SCALE GENOMIC DNA]</scope>
    <source>
        <strain>C57BL/6J</strain>
    </source>
</reference>
<reference key="3">
    <citation type="journal article" date="2004" name="Genome Res.">
        <title>The status, quality, and expansion of the NIH full-length cDNA project: the Mammalian Gene Collection (MGC).</title>
        <authorList>
            <consortium name="The MGC Project Team"/>
        </authorList>
    </citation>
    <scope>NUCLEOTIDE SEQUENCE [LARGE SCALE MRNA]</scope>
    <source>
        <strain>FVB/N</strain>
        <tissue>Heart</tissue>
        <tissue>Kidney</tissue>
        <tissue>Lung</tissue>
        <tissue>Mammary tumor</tissue>
    </source>
</reference>
<reference key="4">
    <citation type="journal article" date="2009" name="Immunity">
        <title>The phagosomal proteome in interferon-gamma-activated macrophages.</title>
        <authorList>
            <person name="Trost M."/>
            <person name="English L."/>
            <person name="Lemieux S."/>
            <person name="Courcelles M."/>
            <person name="Desjardins M."/>
            <person name="Thibault P."/>
        </authorList>
    </citation>
    <scope>PHOSPHORYLATION [LARGE SCALE ANALYSIS] AT SER-235</scope>
    <scope>IDENTIFICATION BY MASS SPECTROMETRY [LARGE SCALE ANALYSIS]</scope>
</reference>
<reference key="5">
    <citation type="journal article" date="2010" name="Cell">
        <title>A tissue-specific atlas of mouse protein phosphorylation and expression.</title>
        <authorList>
            <person name="Huttlin E.L."/>
            <person name="Jedrychowski M.P."/>
            <person name="Elias J.E."/>
            <person name="Goswami T."/>
            <person name="Rad R."/>
            <person name="Beausoleil S.A."/>
            <person name="Villen J."/>
            <person name="Haas W."/>
            <person name="Sowa M.E."/>
            <person name="Gygi S.P."/>
        </authorList>
    </citation>
    <scope>PHOSPHORYLATION [LARGE SCALE ANALYSIS] AT SER-215 AND SER-235</scope>
    <scope>IDENTIFICATION BY MASS SPECTROMETRY [LARGE SCALE ANALYSIS]</scope>
    <source>
        <tissue>Lung</tissue>
        <tissue>Pancreas</tissue>
        <tissue>Spleen</tissue>
        <tissue>Testis</tissue>
    </source>
</reference>
<organism>
    <name type="scientific">Mus musculus</name>
    <name type="common">Mouse</name>
    <dbReference type="NCBI Taxonomy" id="10090"/>
    <lineage>
        <taxon>Eukaryota</taxon>
        <taxon>Metazoa</taxon>
        <taxon>Chordata</taxon>
        <taxon>Craniata</taxon>
        <taxon>Vertebrata</taxon>
        <taxon>Euteleostomi</taxon>
        <taxon>Mammalia</taxon>
        <taxon>Eutheria</taxon>
        <taxon>Euarchontoglires</taxon>
        <taxon>Glires</taxon>
        <taxon>Rodentia</taxon>
        <taxon>Myomorpha</taxon>
        <taxon>Muroidea</taxon>
        <taxon>Muridae</taxon>
        <taxon>Murinae</taxon>
        <taxon>Mus</taxon>
        <taxon>Mus</taxon>
    </lineage>
</organism>
<keyword id="KW-0007">Acetylation</keyword>
<keyword id="KW-0963">Cytoplasm</keyword>
<keyword id="KW-1017">Isopeptide bond</keyword>
<keyword id="KW-0479">Metal-binding</keyword>
<keyword id="KW-0507">mRNA processing</keyword>
<keyword id="KW-0508">mRNA splicing</keyword>
<keyword id="KW-0539">Nucleus</keyword>
<keyword id="KW-0597">Phosphoprotein</keyword>
<keyword id="KW-1185">Reference proteome</keyword>
<keyword id="KW-0747">Spliceosome</keyword>
<keyword id="KW-0832">Ubl conjugation</keyword>
<keyword id="KW-0862">Zinc</keyword>
<keyword id="KW-0863">Zinc-finger</keyword>
<gene>
    <name type="primary">Slu7</name>
    <name type="synonym">D11Ertd730e</name>
</gene>
<evidence type="ECO:0000250" key="1"/>
<evidence type="ECO:0000250" key="2">
    <source>
        <dbReference type="UniProtKB" id="O95391"/>
    </source>
</evidence>
<evidence type="ECO:0000256" key="3">
    <source>
        <dbReference type="SAM" id="MobiDB-lite"/>
    </source>
</evidence>
<evidence type="ECO:0000305" key="4"/>
<evidence type="ECO:0007744" key="5">
    <source>
    </source>
</evidence>
<evidence type="ECO:0007744" key="6">
    <source>
    </source>
</evidence>
<proteinExistence type="evidence at protein level"/>
<feature type="initiator methionine" description="Removed" evidence="2">
    <location>
        <position position="1"/>
    </location>
</feature>
<feature type="chain" id="PRO_0000289196" description="Pre-mRNA-splicing factor SLU7">
    <location>
        <begin position="2"/>
        <end position="585"/>
    </location>
</feature>
<feature type="zinc finger region" description="CCHC-type">
    <location>
        <begin position="118"/>
        <end position="135"/>
    </location>
</feature>
<feature type="region of interest" description="Disordered" evidence="3">
    <location>
        <begin position="1"/>
        <end position="102"/>
    </location>
</feature>
<feature type="region of interest" description="Disordered" evidence="3">
    <location>
        <begin position="206"/>
        <end position="254"/>
    </location>
</feature>
<feature type="region of interest" description="Disordered" evidence="3">
    <location>
        <begin position="496"/>
        <end position="529"/>
    </location>
</feature>
<feature type="region of interest" description="Disordered" evidence="3">
    <location>
        <begin position="547"/>
        <end position="585"/>
    </location>
</feature>
<feature type="short sequence motif" description="Bipartite nuclear localization signal" evidence="1">
    <location>
        <begin position="129"/>
        <end position="169"/>
    </location>
</feature>
<feature type="compositionally biased region" description="Basic and acidic residues" evidence="3">
    <location>
        <begin position="20"/>
        <end position="44"/>
    </location>
</feature>
<feature type="compositionally biased region" description="Acidic residues" evidence="3">
    <location>
        <begin position="235"/>
        <end position="248"/>
    </location>
</feature>
<feature type="compositionally biased region" description="Basic residues" evidence="3">
    <location>
        <begin position="498"/>
        <end position="509"/>
    </location>
</feature>
<feature type="compositionally biased region" description="Basic and acidic residues" evidence="3">
    <location>
        <begin position="517"/>
        <end position="529"/>
    </location>
</feature>
<feature type="compositionally biased region" description="Basic and acidic residues" evidence="3">
    <location>
        <begin position="556"/>
        <end position="577"/>
    </location>
</feature>
<feature type="modified residue" description="N-acetylserine" evidence="2">
    <location>
        <position position="2"/>
    </location>
</feature>
<feature type="modified residue" description="Phosphoserine" evidence="6">
    <location>
        <position position="215"/>
    </location>
</feature>
<feature type="modified residue" description="Phosphoserine" evidence="2">
    <location>
        <position position="227"/>
    </location>
</feature>
<feature type="modified residue" description="Phosphoserine" evidence="5 6">
    <location>
        <position position="235"/>
    </location>
</feature>
<feature type="cross-link" description="Glycyl lysine isopeptide (Lys-Gly) (interchain with G-Cter in SUMO2)" evidence="2">
    <location>
        <position position="349"/>
    </location>
</feature>
<feature type="cross-link" description="Glycyl lysine isopeptide (Lys-Gly) (interchain with G-Cter in SUMO2)" evidence="2">
    <location>
        <position position="408"/>
    </location>
</feature>
<feature type="sequence conflict" description="In Ref. 1; BAC32662." evidence="4" ref="1">
    <original>R</original>
    <variation>K</variation>
    <location>
        <position position="43"/>
    </location>
</feature>
<feature type="sequence conflict" description="In Ref. 1; BAC33093." evidence="4" ref="1">
    <original>Y</original>
    <variation>H</variation>
    <location>
        <position position="102"/>
    </location>
</feature>
<sequence length="585" mass="68080">MSAAAVDPVSATPMTGSKEMSLEEPKKMTREDWRKKKELEEQRKLGNAPAEVDEEGKDINPHIPQYISSVPWYIDPSKRPTLKHQRPQPEKQKQFSSSGEWYKRGVKENSITTKYRKGACENCGAMTHKRKDCFERPRRVGAKFTGTNIAPDEHVQPQLMFDYDGKRDRWNGYNPEEHMKIVEEYAKVDLAKRTLKAQKLQEELASGKLVEQANSPKHQWGEEEPNSQMEKDHNSEDEDEDKYADDIDMPGQNFDSKRRITVRNLRIREDIAKYLRNLDPNSAYYDPKTRAMRENPYANAGKNPDEVSYAGDNFVRYTGDTISMAQTQLFAWEAYDKGSEVHLQADPTKLELLYKSFKVKKEDFKEQQKESILEKYGGQEHLDAPPAELLLAQTEDYVEYSRHGTVIKGQERAVACSKYEEDVKINNHTHIWGSYWKEGRWGYKCCHSFFKYSYCTGEAGKESVNSEECIITGATAEESVKKPQALLELHQEKLKEEKKKKKKKKKHRKSSSDSDDEERKQEKLKKALNAEEARLLHVKEIMQIDERKRPYNSIYETREPTEEEMEAYRMKRQRPDDPMASFLGQ</sequence>
<comment type="function">
    <text evidence="2">Required for pre-mRNA splicing as component of the spliceosome. Participates in the second catalytic step of pre-mRNA splicing, when the free hydroxyl group of exon I attacks the 3'-splice site to generate spliced mRNA and the excised lariat intron. Required for holding exon 1 properly in the spliceosome and for correct AG identification when more than one possible AG exists in 3'-splicing site region. May be involved in the activation of proximal AG. Probably also involved in alternative splicing regulation.</text>
</comment>
<comment type="subunit">
    <text evidence="2">Component of pre-catalytic, catalytic and post-catalytic spliceosomes. Associates with the spliceosome prior to recognition of the 3'-splice site for step II, probably during catalysis of step I.</text>
</comment>
<comment type="subcellular location">
    <subcellularLocation>
        <location evidence="2">Nucleus</location>
    </subcellularLocation>
    <subcellularLocation>
        <location evidence="2">Nucleus speckle</location>
    </subcellularLocation>
    <subcellularLocation>
        <location evidence="2">Cytoplasm</location>
    </subcellularLocation>
    <text evidence="2">Predominantly nuclear. Shuttling between the nucleus and the cytoplasm is regulated by the CCHC-type zinc finger. Upon UV-C stress stimulus, the nuclear concentration of the protein decreases, affecting alternative splicing. Translocates from the nucleus to the cytoplasm after heat shock cell treatment. Accumulates in cytoplasmic vesicle-like organelles after heat shock treatment, which may represent stress granules.</text>
</comment>
<comment type="domain">
    <text evidence="1">The CCHC-type zinc finger is required to retain the protein within the nucleus and prevent its shuttle back to the cytoplasm via the CRM1 pathway.</text>
</comment>
<comment type="similarity">
    <text evidence="4">Belongs to the SLU7 family.</text>
</comment>
<comment type="sequence caution" evidence="4">
    <conflict type="erroneous initiation">
        <sequence resource="EMBL-CDS" id="AAH13810"/>
    </conflict>
    <text>Extended N-terminus.</text>
</comment>
<comment type="sequence caution" evidence="4">
    <conflict type="erroneous gene model prediction">
        <sequence resource="EMBL-CDS" id="CAI24831"/>
    </conflict>
</comment>
<protein>
    <recommendedName>
        <fullName>Pre-mRNA-splicing factor SLU7</fullName>
    </recommendedName>
</protein>
<name>SLU7_MOUSE</name>
<accession>Q8BHJ9</accession>
<accession>Q3KQQ3</accession>
<accession>Q5SRU1</accession>
<accession>Q63ZX3</accession>
<accession>Q6P923</accession>
<accession>Q8BL59</accession>
<accession>Q8BXD5</accession>
<accession>Q8R5C1</accession>
<accession>Q91YV6</accession>
<dbReference type="EMBL" id="AK029117">
    <property type="protein sequence ID" value="BAC26306.1"/>
    <property type="molecule type" value="mRNA"/>
</dbReference>
<dbReference type="EMBL" id="AK046262">
    <property type="protein sequence ID" value="BAC32662.1"/>
    <property type="molecule type" value="mRNA"/>
</dbReference>
<dbReference type="EMBL" id="AK047597">
    <property type="protein sequence ID" value="BAC33093.1"/>
    <property type="molecule type" value="mRNA"/>
</dbReference>
<dbReference type="EMBL" id="AK049178">
    <property type="protein sequence ID" value="BAC33589.1"/>
    <property type="molecule type" value="mRNA"/>
</dbReference>
<dbReference type="EMBL" id="AL670472">
    <property type="protein sequence ID" value="CAI24830.1"/>
    <property type="molecule type" value="Genomic_DNA"/>
</dbReference>
<dbReference type="EMBL" id="AL670472">
    <property type="protein sequence ID" value="CAI24831.1"/>
    <property type="status" value="ALT_SEQ"/>
    <property type="molecule type" value="Genomic_DNA"/>
</dbReference>
<dbReference type="EMBL" id="BC013810">
    <property type="protein sequence ID" value="AAH13810.1"/>
    <property type="status" value="ALT_INIT"/>
    <property type="molecule type" value="mRNA"/>
</dbReference>
<dbReference type="EMBL" id="BC023057">
    <property type="protein sequence ID" value="AAH23057.1"/>
    <property type="molecule type" value="mRNA"/>
</dbReference>
<dbReference type="EMBL" id="BC060954">
    <property type="protein sequence ID" value="AAH60954.1"/>
    <property type="molecule type" value="mRNA"/>
</dbReference>
<dbReference type="EMBL" id="BC082780">
    <property type="protein sequence ID" value="AAH82780.1"/>
    <property type="status" value="ALT_TERM"/>
    <property type="molecule type" value="mRNA"/>
</dbReference>
<dbReference type="EMBL" id="BC106099">
    <property type="protein sequence ID" value="AAI06100.1"/>
    <property type="molecule type" value="mRNA"/>
</dbReference>
<dbReference type="CCDS" id="CCDS24557.1"/>
<dbReference type="RefSeq" id="NP_683514.2">
    <property type="nucleotide sequence ID" value="NM_148673.3"/>
</dbReference>
<dbReference type="RefSeq" id="NP_945174.1">
    <property type="nucleotide sequence ID" value="NM_198936.1"/>
</dbReference>
<dbReference type="RefSeq" id="XP_011247125.1">
    <property type="nucleotide sequence ID" value="XM_011248823.3"/>
</dbReference>
<dbReference type="SMR" id="Q8BHJ9"/>
<dbReference type="BioGRID" id="228728">
    <property type="interactions" value="21"/>
</dbReference>
<dbReference type="FunCoup" id="Q8BHJ9">
    <property type="interactions" value="5297"/>
</dbReference>
<dbReference type="STRING" id="10090.ENSMUSP00000020681"/>
<dbReference type="iPTMnet" id="Q8BHJ9"/>
<dbReference type="PhosphoSitePlus" id="Q8BHJ9"/>
<dbReference type="jPOST" id="Q8BHJ9"/>
<dbReference type="PaxDb" id="10090-ENSMUSP00000020681"/>
<dbReference type="PeptideAtlas" id="Q8BHJ9"/>
<dbReference type="ProteomicsDB" id="261083"/>
<dbReference type="Pumba" id="Q8BHJ9"/>
<dbReference type="Antibodypedia" id="28531">
    <property type="antibodies" value="345 antibodies from 30 providers"/>
</dbReference>
<dbReference type="DNASU" id="193116"/>
<dbReference type="Ensembl" id="ENSMUST00000020681.10">
    <property type="protein sequence ID" value="ENSMUSP00000020681.4"/>
    <property type="gene ID" value="ENSMUSG00000020409.11"/>
</dbReference>
<dbReference type="Ensembl" id="ENSMUST00000178622.3">
    <property type="protein sequence ID" value="ENSMUSP00000137281.2"/>
    <property type="gene ID" value="ENSMUSG00000020409.11"/>
</dbReference>
<dbReference type="GeneID" id="193116"/>
<dbReference type="KEGG" id="mmu:193116"/>
<dbReference type="UCSC" id="uc007imp.1">
    <property type="organism name" value="mouse"/>
</dbReference>
<dbReference type="AGR" id="MGI:2385598"/>
<dbReference type="CTD" id="10569"/>
<dbReference type="MGI" id="MGI:2385598">
    <property type="gene designation" value="Slu7"/>
</dbReference>
<dbReference type="VEuPathDB" id="HostDB:ENSMUSG00000020409"/>
<dbReference type="eggNOG" id="KOG2560">
    <property type="taxonomic scope" value="Eukaryota"/>
</dbReference>
<dbReference type="GeneTree" id="ENSGT00390000002292"/>
<dbReference type="HOGENOM" id="CLU_019317_2_0_1"/>
<dbReference type="InParanoid" id="Q8BHJ9"/>
<dbReference type="OMA" id="KYAWESQ"/>
<dbReference type="OrthoDB" id="249612at2759"/>
<dbReference type="PhylomeDB" id="Q8BHJ9"/>
<dbReference type="TreeFam" id="TF105691"/>
<dbReference type="Reactome" id="R-MMU-159236">
    <property type="pathway name" value="Transport of Mature mRNA derived from an Intron-Containing Transcript"/>
</dbReference>
<dbReference type="Reactome" id="R-MMU-72163">
    <property type="pathway name" value="mRNA Splicing - Major Pathway"/>
</dbReference>
<dbReference type="Reactome" id="R-MMU-72187">
    <property type="pathway name" value="mRNA 3'-end processing"/>
</dbReference>
<dbReference type="Reactome" id="R-MMU-73856">
    <property type="pathway name" value="RNA Polymerase II Transcription Termination"/>
</dbReference>
<dbReference type="BioGRID-ORCS" id="193116">
    <property type="hits" value="24 hits in 77 CRISPR screens"/>
</dbReference>
<dbReference type="ChiTaRS" id="Slu7">
    <property type="organism name" value="mouse"/>
</dbReference>
<dbReference type="PRO" id="PR:Q8BHJ9"/>
<dbReference type="Proteomes" id="UP000000589">
    <property type="component" value="Chromosome 11"/>
</dbReference>
<dbReference type="RNAct" id="Q8BHJ9">
    <property type="molecule type" value="protein"/>
</dbReference>
<dbReference type="Bgee" id="ENSMUSG00000020409">
    <property type="expression patterns" value="Expressed in saccule of membranous labyrinth and 279 other cell types or tissues"/>
</dbReference>
<dbReference type="ExpressionAtlas" id="Q8BHJ9">
    <property type="expression patterns" value="baseline and differential"/>
</dbReference>
<dbReference type="GO" id="GO:0071013">
    <property type="term" value="C:catalytic step 2 spliceosome"/>
    <property type="evidence" value="ECO:0007669"/>
    <property type="project" value="Ensembl"/>
</dbReference>
<dbReference type="GO" id="GO:0005737">
    <property type="term" value="C:cytoplasm"/>
    <property type="evidence" value="ECO:0000250"/>
    <property type="project" value="UniProtKB"/>
</dbReference>
<dbReference type="GO" id="GO:0005829">
    <property type="term" value="C:cytosol"/>
    <property type="evidence" value="ECO:0007669"/>
    <property type="project" value="Ensembl"/>
</dbReference>
<dbReference type="GO" id="GO:0016607">
    <property type="term" value="C:nuclear speck"/>
    <property type="evidence" value="ECO:0000250"/>
    <property type="project" value="HGNC-UCL"/>
</dbReference>
<dbReference type="GO" id="GO:0005634">
    <property type="term" value="C:nucleus"/>
    <property type="evidence" value="ECO:0000250"/>
    <property type="project" value="UniProtKB"/>
</dbReference>
<dbReference type="GO" id="GO:0030532">
    <property type="term" value="C:small nuclear ribonucleoprotein complex"/>
    <property type="evidence" value="ECO:0000250"/>
    <property type="project" value="HGNC-UCL"/>
</dbReference>
<dbReference type="GO" id="GO:0005681">
    <property type="term" value="C:spliceosomal complex"/>
    <property type="evidence" value="ECO:0000250"/>
    <property type="project" value="HGNC-UCL"/>
</dbReference>
<dbReference type="GO" id="GO:0030628">
    <property type="term" value="F:pre-mRNA 3'-splice site binding"/>
    <property type="evidence" value="ECO:0000250"/>
    <property type="project" value="HGNC-UCL"/>
</dbReference>
<dbReference type="GO" id="GO:0000386">
    <property type="term" value="F:second spliceosomal transesterification activity"/>
    <property type="evidence" value="ECO:0000250"/>
    <property type="project" value="HGNC-UCL"/>
</dbReference>
<dbReference type="GO" id="GO:0008270">
    <property type="term" value="F:zinc ion binding"/>
    <property type="evidence" value="ECO:0000250"/>
    <property type="project" value="HGNC-UCL"/>
</dbReference>
<dbReference type="GO" id="GO:0000380">
    <property type="term" value="P:alternative mRNA splicing, via spliceosome"/>
    <property type="evidence" value="ECO:0000250"/>
    <property type="project" value="HGNC-UCL"/>
</dbReference>
<dbReference type="GO" id="GO:0034605">
    <property type="term" value="P:cellular response to heat"/>
    <property type="evidence" value="ECO:0000250"/>
    <property type="project" value="UniProtKB"/>
</dbReference>
<dbReference type="GO" id="GO:0006886">
    <property type="term" value="P:intracellular protein transport"/>
    <property type="evidence" value="ECO:0000250"/>
    <property type="project" value="UniProtKB"/>
</dbReference>
<dbReference type="GO" id="GO:0000389">
    <property type="term" value="P:mRNA 3'-splice site recognition"/>
    <property type="evidence" value="ECO:0000250"/>
    <property type="project" value="HGNC-UCL"/>
</dbReference>
<dbReference type="GO" id="GO:0000375">
    <property type="term" value="P:RNA splicing, via transesterification reactions"/>
    <property type="evidence" value="ECO:0000250"/>
    <property type="project" value="HGNC-UCL"/>
</dbReference>
<dbReference type="InterPro" id="IPR021715">
    <property type="entry name" value="Slu7_dom"/>
</dbReference>
<dbReference type="InterPro" id="IPR039974">
    <property type="entry name" value="Splicing_factor_SLU7"/>
</dbReference>
<dbReference type="PANTHER" id="PTHR12942:SF2">
    <property type="entry name" value="PRE-MRNA-SPLICING FACTOR SLU7"/>
    <property type="match status" value="1"/>
</dbReference>
<dbReference type="PANTHER" id="PTHR12942">
    <property type="entry name" value="STEP II SPLICING FACTOR SLU7"/>
    <property type="match status" value="1"/>
</dbReference>
<dbReference type="Pfam" id="PF11708">
    <property type="entry name" value="Slu7"/>
    <property type="match status" value="1"/>
</dbReference>